<keyword id="KW-0903">Direct protein sequencing</keyword>
<keyword id="KW-1213">G-protein coupled receptor impairing toxin</keyword>
<keyword id="KW-0964">Secreted</keyword>
<keyword id="KW-0800">Toxin</keyword>
<keyword id="KW-0838">Vasoactive</keyword>
<keyword id="KW-0840">Vasodilator</keyword>
<reference key="1">
    <citation type="journal article" date="1993" name="FEBS Lett.">
        <title>Purification of a vasoactive peptide related to lysyl-bradykinin from trout plasma.</title>
        <authorList>
            <person name="Conlon J.M."/>
            <person name="Olson K.R."/>
        </authorList>
    </citation>
    <scope>PROTEIN SEQUENCE</scope>
</reference>
<dbReference type="PIR" id="S39030">
    <property type="entry name" value="S39030"/>
</dbReference>
<dbReference type="Proteomes" id="UP000694395">
    <property type="component" value="Unplaced"/>
</dbReference>
<dbReference type="GO" id="GO:0005576">
    <property type="term" value="C:extracellular region"/>
    <property type="evidence" value="ECO:0007669"/>
    <property type="project" value="UniProtKB-SubCell"/>
</dbReference>
<dbReference type="GO" id="GO:0090729">
    <property type="term" value="F:toxin activity"/>
    <property type="evidence" value="ECO:0007669"/>
    <property type="project" value="UniProtKB-KW"/>
</dbReference>
<dbReference type="GO" id="GO:0042311">
    <property type="term" value="P:vasodilation"/>
    <property type="evidence" value="ECO:0007669"/>
    <property type="project" value="UniProtKB-KW"/>
</dbReference>
<evidence type="ECO:0000305" key="1"/>
<organism>
    <name type="scientific">Oncorhynchus mykiss</name>
    <name type="common">Rainbow trout</name>
    <name type="synonym">Salmo gairdneri</name>
    <dbReference type="NCBI Taxonomy" id="8022"/>
    <lineage>
        <taxon>Eukaryota</taxon>
        <taxon>Metazoa</taxon>
        <taxon>Chordata</taxon>
        <taxon>Craniata</taxon>
        <taxon>Vertebrata</taxon>
        <taxon>Euteleostomi</taxon>
        <taxon>Actinopterygii</taxon>
        <taxon>Neopterygii</taxon>
        <taxon>Teleostei</taxon>
        <taxon>Protacanthopterygii</taxon>
        <taxon>Salmoniformes</taxon>
        <taxon>Salmonidae</taxon>
        <taxon>Salmoninae</taxon>
        <taxon>Oncorhynchus</taxon>
    </lineage>
</organism>
<accession>Q9PRZ1</accession>
<name>BRK_ONCMY</name>
<protein>
    <recommendedName>
        <fullName>Lysyl-bradykinin-like</fullName>
    </recommendedName>
</protein>
<feature type="peptide" id="PRO_0000043519" description="Lysyl-bradykinin-like">
    <location>
        <begin position="1"/>
        <end position="10"/>
    </location>
</feature>
<comment type="function">
    <text>Smooth muscle contraction. Probably plays a role for this system in cardiovascular regulation in fish. May target bradykinin receptors (BDKRB).</text>
</comment>
<comment type="subcellular location">
    <subcellularLocation>
        <location>Secreted</location>
    </subcellularLocation>
</comment>
<comment type="tissue specificity">
    <text>Plasma.</text>
</comment>
<comment type="similarity">
    <text evidence="1">Belongs to the bradykinin-related peptide family.</text>
</comment>
<sequence>KRPPGWSPLR</sequence>
<proteinExistence type="evidence at protein level"/>